<comment type="function">
    <text evidence="4">Plays a role in the establishment of normal sperm morphology during spermatogenesis and is required for acrosome attachment to the nuclear envelope.</text>
</comment>
<comment type="subunit">
    <text evidence="4">Interacts with proteins of spermatozoa head including ACTL7A, CCIN, FAM209A and SPACA1; the interactions may be necessary for proper acrosome attachment to the nuclear envelope.</text>
</comment>
<comment type="subcellular location">
    <subcellularLocation>
        <location evidence="3 4 5">Cytoplasm</location>
        <location evidence="3 4 5">Cytoskeleton</location>
        <location evidence="3 4 5">Perinuclear theca</location>
        <location evidence="3 4 5">Calyx</location>
    </subcellularLocation>
    <subcellularLocation>
        <location evidence="1">Cytoplasm</location>
        <location evidence="1">Cytoskeleton</location>
        <location evidence="1">Perinuclear theca</location>
    </subcellularLocation>
    <text evidence="1">Localizes to the subacrosomal layer of the perinuclear theca in round and elongating spermatids. Localizes to the calyx, also known as post-acrosomal region, in spermatozoa.</text>
</comment>
<comment type="tissue specificity">
    <text evidence="5">Testis.</text>
</comment>
<comment type="disease" evidence="3 4">
    <disease id="DI-06893">
        <name>Spermatogenic failure, X-linked, 8</name>
        <acronym>SPGFX8</acronym>
        <description>A male infertility disorder characterized by a significant reduction in progressive sperm motility, and aberrant sperm morphology. Patient sperm show head and midpiece defects with deformed and detached acrosomes, and flagellar defects.</description>
        <dbReference type="MIM" id="301119"/>
    </disease>
    <text>Disease susceptibility may be associated with variants affecting the gene represented in this entry.</text>
</comment>
<keyword id="KW-0963">Cytoplasm</keyword>
<keyword id="KW-0206">Cytoskeleton</keyword>
<keyword id="KW-0217">Developmental protein</keyword>
<keyword id="KW-0221">Differentiation</keyword>
<keyword id="KW-1267">Proteomics identification</keyword>
<keyword id="KW-1185">Reference proteome</keyword>
<keyword id="KW-0677">Repeat</keyword>
<keyword id="KW-0744">Spermatogenesis</keyword>
<organism>
    <name type="scientific">Homo sapiens</name>
    <name type="common">Human</name>
    <dbReference type="NCBI Taxonomy" id="9606"/>
    <lineage>
        <taxon>Eukaryota</taxon>
        <taxon>Metazoa</taxon>
        <taxon>Chordata</taxon>
        <taxon>Craniata</taxon>
        <taxon>Vertebrata</taxon>
        <taxon>Euteleostomi</taxon>
        <taxon>Mammalia</taxon>
        <taxon>Eutheria</taxon>
        <taxon>Euarchontoglires</taxon>
        <taxon>Primates</taxon>
        <taxon>Haplorrhini</taxon>
        <taxon>Catarrhini</taxon>
        <taxon>Hominidae</taxon>
        <taxon>Homo</taxon>
    </lineage>
</organism>
<name>CYLC1_HUMAN</name>
<reference key="1">
    <citation type="journal article" date="2005" name="Nature">
        <title>The DNA sequence of the human X chromosome.</title>
        <authorList>
            <person name="Ross M.T."/>
            <person name="Grafham D.V."/>
            <person name="Coffey A.J."/>
            <person name="Scherer S."/>
            <person name="McLay K."/>
            <person name="Muzny D."/>
            <person name="Platzer M."/>
            <person name="Howell G.R."/>
            <person name="Burrows C."/>
            <person name="Bird C.P."/>
            <person name="Frankish A."/>
            <person name="Lovell F.L."/>
            <person name="Howe K.L."/>
            <person name="Ashurst J.L."/>
            <person name="Fulton R.S."/>
            <person name="Sudbrak R."/>
            <person name="Wen G."/>
            <person name="Jones M.C."/>
            <person name="Hurles M.E."/>
            <person name="Andrews T.D."/>
            <person name="Scott C.E."/>
            <person name="Searle S."/>
            <person name="Ramser J."/>
            <person name="Whittaker A."/>
            <person name="Deadman R."/>
            <person name="Carter N.P."/>
            <person name="Hunt S.E."/>
            <person name="Chen R."/>
            <person name="Cree A."/>
            <person name="Gunaratne P."/>
            <person name="Havlak P."/>
            <person name="Hodgson A."/>
            <person name="Metzker M.L."/>
            <person name="Richards S."/>
            <person name="Scott G."/>
            <person name="Steffen D."/>
            <person name="Sodergren E."/>
            <person name="Wheeler D.A."/>
            <person name="Worley K.C."/>
            <person name="Ainscough R."/>
            <person name="Ambrose K.D."/>
            <person name="Ansari-Lari M.A."/>
            <person name="Aradhya S."/>
            <person name="Ashwell R.I."/>
            <person name="Babbage A.K."/>
            <person name="Bagguley C.L."/>
            <person name="Ballabio A."/>
            <person name="Banerjee R."/>
            <person name="Barker G.E."/>
            <person name="Barlow K.F."/>
            <person name="Barrett I.P."/>
            <person name="Bates K.N."/>
            <person name="Beare D.M."/>
            <person name="Beasley H."/>
            <person name="Beasley O."/>
            <person name="Beck A."/>
            <person name="Bethel G."/>
            <person name="Blechschmidt K."/>
            <person name="Brady N."/>
            <person name="Bray-Allen S."/>
            <person name="Bridgeman A.M."/>
            <person name="Brown A.J."/>
            <person name="Brown M.J."/>
            <person name="Bonnin D."/>
            <person name="Bruford E.A."/>
            <person name="Buhay C."/>
            <person name="Burch P."/>
            <person name="Burford D."/>
            <person name="Burgess J."/>
            <person name="Burrill W."/>
            <person name="Burton J."/>
            <person name="Bye J.M."/>
            <person name="Carder C."/>
            <person name="Carrel L."/>
            <person name="Chako J."/>
            <person name="Chapman J.C."/>
            <person name="Chavez D."/>
            <person name="Chen E."/>
            <person name="Chen G."/>
            <person name="Chen Y."/>
            <person name="Chen Z."/>
            <person name="Chinault C."/>
            <person name="Ciccodicola A."/>
            <person name="Clark S.Y."/>
            <person name="Clarke G."/>
            <person name="Clee C.M."/>
            <person name="Clegg S."/>
            <person name="Clerc-Blankenburg K."/>
            <person name="Clifford K."/>
            <person name="Cobley V."/>
            <person name="Cole C.G."/>
            <person name="Conquer J.S."/>
            <person name="Corby N."/>
            <person name="Connor R.E."/>
            <person name="David R."/>
            <person name="Davies J."/>
            <person name="Davis C."/>
            <person name="Davis J."/>
            <person name="Delgado O."/>
            <person name="Deshazo D."/>
            <person name="Dhami P."/>
            <person name="Ding Y."/>
            <person name="Dinh H."/>
            <person name="Dodsworth S."/>
            <person name="Draper H."/>
            <person name="Dugan-Rocha S."/>
            <person name="Dunham A."/>
            <person name="Dunn M."/>
            <person name="Durbin K.J."/>
            <person name="Dutta I."/>
            <person name="Eades T."/>
            <person name="Ellwood M."/>
            <person name="Emery-Cohen A."/>
            <person name="Errington H."/>
            <person name="Evans K.L."/>
            <person name="Faulkner L."/>
            <person name="Francis F."/>
            <person name="Frankland J."/>
            <person name="Fraser A.E."/>
            <person name="Galgoczy P."/>
            <person name="Gilbert J."/>
            <person name="Gill R."/>
            <person name="Gloeckner G."/>
            <person name="Gregory S.G."/>
            <person name="Gribble S."/>
            <person name="Griffiths C."/>
            <person name="Grocock R."/>
            <person name="Gu Y."/>
            <person name="Gwilliam R."/>
            <person name="Hamilton C."/>
            <person name="Hart E.A."/>
            <person name="Hawes A."/>
            <person name="Heath P.D."/>
            <person name="Heitmann K."/>
            <person name="Hennig S."/>
            <person name="Hernandez J."/>
            <person name="Hinzmann B."/>
            <person name="Ho S."/>
            <person name="Hoffs M."/>
            <person name="Howden P.J."/>
            <person name="Huckle E.J."/>
            <person name="Hume J."/>
            <person name="Hunt P.J."/>
            <person name="Hunt A.R."/>
            <person name="Isherwood J."/>
            <person name="Jacob L."/>
            <person name="Johnson D."/>
            <person name="Jones S."/>
            <person name="de Jong P.J."/>
            <person name="Joseph S.S."/>
            <person name="Keenan S."/>
            <person name="Kelly S."/>
            <person name="Kershaw J.K."/>
            <person name="Khan Z."/>
            <person name="Kioschis P."/>
            <person name="Klages S."/>
            <person name="Knights A.J."/>
            <person name="Kosiura A."/>
            <person name="Kovar-Smith C."/>
            <person name="Laird G.K."/>
            <person name="Langford C."/>
            <person name="Lawlor S."/>
            <person name="Leversha M."/>
            <person name="Lewis L."/>
            <person name="Liu W."/>
            <person name="Lloyd C."/>
            <person name="Lloyd D.M."/>
            <person name="Loulseged H."/>
            <person name="Loveland J.E."/>
            <person name="Lovell J.D."/>
            <person name="Lozado R."/>
            <person name="Lu J."/>
            <person name="Lyne R."/>
            <person name="Ma J."/>
            <person name="Maheshwari M."/>
            <person name="Matthews L.H."/>
            <person name="McDowall J."/>
            <person name="McLaren S."/>
            <person name="McMurray A."/>
            <person name="Meidl P."/>
            <person name="Meitinger T."/>
            <person name="Milne S."/>
            <person name="Miner G."/>
            <person name="Mistry S.L."/>
            <person name="Morgan M."/>
            <person name="Morris S."/>
            <person name="Mueller I."/>
            <person name="Mullikin J.C."/>
            <person name="Nguyen N."/>
            <person name="Nordsiek G."/>
            <person name="Nyakatura G."/>
            <person name="O'dell C.N."/>
            <person name="Okwuonu G."/>
            <person name="Palmer S."/>
            <person name="Pandian R."/>
            <person name="Parker D."/>
            <person name="Parrish J."/>
            <person name="Pasternak S."/>
            <person name="Patel D."/>
            <person name="Pearce A.V."/>
            <person name="Pearson D.M."/>
            <person name="Pelan S.E."/>
            <person name="Perez L."/>
            <person name="Porter K.M."/>
            <person name="Ramsey Y."/>
            <person name="Reichwald K."/>
            <person name="Rhodes S."/>
            <person name="Ridler K.A."/>
            <person name="Schlessinger D."/>
            <person name="Schueler M.G."/>
            <person name="Sehra H.K."/>
            <person name="Shaw-Smith C."/>
            <person name="Shen H."/>
            <person name="Sheridan E.M."/>
            <person name="Shownkeen R."/>
            <person name="Skuce C.D."/>
            <person name="Smith M.L."/>
            <person name="Sotheran E.C."/>
            <person name="Steingruber H.E."/>
            <person name="Steward C.A."/>
            <person name="Storey R."/>
            <person name="Swann R.M."/>
            <person name="Swarbreck D."/>
            <person name="Tabor P.E."/>
            <person name="Taudien S."/>
            <person name="Taylor T."/>
            <person name="Teague B."/>
            <person name="Thomas K."/>
            <person name="Thorpe A."/>
            <person name="Timms K."/>
            <person name="Tracey A."/>
            <person name="Trevanion S."/>
            <person name="Tromans A.C."/>
            <person name="d'Urso M."/>
            <person name="Verduzco D."/>
            <person name="Villasana D."/>
            <person name="Waldron L."/>
            <person name="Wall M."/>
            <person name="Wang Q."/>
            <person name="Warren J."/>
            <person name="Warry G.L."/>
            <person name="Wei X."/>
            <person name="West A."/>
            <person name="Whitehead S.L."/>
            <person name="Whiteley M.N."/>
            <person name="Wilkinson J.E."/>
            <person name="Willey D.L."/>
            <person name="Williams G."/>
            <person name="Williams L."/>
            <person name="Williamson A."/>
            <person name="Williamson H."/>
            <person name="Wilming L."/>
            <person name="Woodmansey R.L."/>
            <person name="Wray P.W."/>
            <person name="Yen J."/>
            <person name="Zhang J."/>
            <person name="Zhou J."/>
            <person name="Zoghbi H."/>
            <person name="Zorilla S."/>
            <person name="Buck D."/>
            <person name="Reinhardt R."/>
            <person name="Poustka A."/>
            <person name="Rosenthal A."/>
            <person name="Lehrach H."/>
            <person name="Meindl A."/>
            <person name="Minx P.J."/>
            <person name="Hillier L.W."/>
            <person name="Willard H.F."/>
            <person name="Wilson R.K."/>
            <person name="Waterston R.H."/>
            <person name="Rice C.M."/>
            <person name="Vaudin M."/>
            <person name="Coulson A."/>
            <person name="Nelson D.L."/>
            <person name="Weinstock G."/>
            <person name="Sulston J.E."/>
            <person name="Durbin R.M."/>
            <person name="Hubbard T."/>
            <person name="Gibbs R.A."/>
            <person name="Beck S."/>
            <person name="Rogers J."/>
            <person name="Bentley D.R."/>
        </authorList>
    </citation>
    <scope>NUCLEOTIDE SEQUENCE [LARGE SCALE GENOMIC DNA]</scope>
</reference>
<reference key="2">
    <citation type="journal article" date="2004" name="Genome Res.">
        <title>The status, quality, and expansion of the NIH full-length cDNA project: the Mammalian Gene Collection (MGC).</title>
        <authorList>
            <consortium name="The MGC Project Team"/>
        </authorList>
    </citation>
    <scope>NUCLEOTIDE SEQUENCE [LARGE SCALE MRNA]</scope>
</reference>
<reference key="3">
    <citation type="journal article" date="1993" name="J. Cell Biol.">
        <title>Molecular characterization of mammalian cylicin, a basic protein of the sperm head cytoskeleton.</title>
        <authorList>
            <person name="Hess H."/>
            <person name="Heid H."/>
            <person name="Franke W.W."/>
        </authorList>
    </citation>
    <scope>NUCLEOTIDE SEQUENCE [MRNA] OF 54-651</scope>
    <scope>TISSUE SPECIFICITY</scope>
    <scope>SUBCELLULAR LOCATION</scope>
    <source>
        <tissue>Testis</tissue>
    </source>
</reference>
<reference key="4">
    <citation type="journal article" date="2024" name="Elife">
        <title>Disruption in CYLC1 leads to acrosome detachment, sperm head deformity, and male in/subfertility in humans and mice.</title>
        <authorList>
            <person name="Jin H.J."/>
            <person name="Fan Y."/>
            <person name="Yang X."/>
            <person name="Dong Y."/>
            <person name="Zhang X.Z."/>
            <person name="Geng X.Y."/>
            <person name="Yan Z."/>
            <person name="Wu L."/>
            <person name="Ma M."/>
            <person name="Li B."/>
            <person name="Lyu Q."/>
            <person name="Pan Y."/>
            <person name="Liu M."/>
            <person name="Kuang Y."/>
            <person name="Chen S.R."/>
        </authorList>
    </citation>
    <scope>VARIANT SPGFX8 ASN-459</scope>
    <scope>INVOLVEMENT IN SPGFX8</scope>
    <scope>FUNCTION</scope>
    <scope>SUBCELLULAR LOCATION</scope>
    <scope>INTERACTION WITH ACTL7A; CCIN; FAM209A AND SPACA1</scope>
</reference>
<reference key="5">
    <citation type="journal article" date="2023" name="Elife">
        <title>Cylicins are a structural component of the sperm calyx being indispensable for male fertility in mice and human.</title>
        <authorList>
            <person name="Schneider S."/>
            <person name="Kovacevic A."/>
            <person name="Mayer M."/>
            <person name="Dicke A.K."/>
            <person name="Arevalo L."/>
            <person name="Koser S.A."/>
            <person name="Hansen J.N."/>
            <person name="Young S."/>
            <person name="Brenker C."/>
            <person name="Kliesch S."/>
            <person name="Wachten D."/>
            <person name="Kirfel G."/>
            <person name="Struenker T."/>
            <person name="Tuettelmann F."/>
            <person name="Schorle H."/>
        </authorList>
    </citation>
    <scope>VARIANT SPGFX8 GLN-574</scope>
    <scope>SUBCELLULAR LOCATION</scope>
</reference>
<gene>
    <name type="primary">CYLC1</name>
    <name type="synonym">CYL</name>
    <name type="synonym">CYL1</name>
</gene>
<evidence type="ECO:0000250" key="1">
    <source>
        <dbReference type="UniProtKB" id="A0A1B0GR13"/>
    </source>
</evidence>
<evidence type="ECO:0000256" key="2">
    <source>
        <dbReference type="SAM" id="MobiDB-lite"/>
    </source>
</evidence>
<evidence type="ECO:0000269" key="3">
    <source>
    </source>
</evidence>
<evidence type="ECO:0000269" key="4">
    <source>
    </source>
</evidence>
<evidence type="ECO:0000269" key="5">
    <source>
    </source>
</evidence>
<evidence type="ECO:0000305" key="6"/>
<proteinExistence type="evidence at protein level"/>
<protein>
    <recommendedName>
        <fullName>Cylicin-1</fullName>
    </recommendedName>
    <alternativeName>
        <fullName>Cylicin I</fullName>
    </alternativeName>
    <alternativeName>
        <fullName>Multiple-band polypeptide I</fullName>
    </alternativeName>
</protein>
<accession>P35663</accession>
<accession>A0AVQ8</accession>
<accession>Q5JQQ9</accession>
<dbReference type="EMBL" id="AL627233">
    <property type="status" value="NOT_ANNOTATED_CDS"/>
    <property type="molecule type" value="Genomic_DNA"/>
</dbReference>
<dbReference type="EMBL" id="BC126461">
    <property type="protein sequence ID" value="AAI26462.1"/>
    <property type="molecule type" value="mRNA"/>
</dbReference>
<dbReference type="EMBL" id="Z22780">
    <property type="protein sequence ID" value="CAA80457.1"/>
    <property type="molecule type" value="mRNA"/>
</dbReference>
<dbReference type="CCDS" id="CCDS35341.1"/>
<dbReference type="PIR" id="B40713">
    <property type="entry name" value="B40713"/>
</dbReference>
<dbReference type="RefSeq" id="NP_066941.1">
    <property type="nucleotide sequence ID" value="NM_021118.3"/>
</dbReference>
<dbReference type="BioGRID" id="107918">
    <property type="interactions" value="20"/>
</dbReference>
<dbReference type="FunCoup" id="P35663">
    <property type="interactions" value="12"/>
</dbReference>
<dbReference type="IntAct" id="P35663">
    <property type="interactions" value="1"/>
</dbReference>
<dbReference type="STRING" id="9606.ENSP00000331556"/>
<dbReference type="CarbonylDB" id="P35663"/>
<dbReference type="GlyGen" id="P35663">
    <property type="glycosylation" value="3 sites, 1 O-linked glycan (3 sites)"/>
</dbReference>
<dbReference type="iPTMnet" id="P35663"/>
<dbReference type="PhosphoSitePlus" id="P35663"/>
<dbReference type="BioMuta" id="CYLC1"/>
<dbReference type="DMDM" id="77416856"/>
<dbReference type="MassIVE" id="P35663"/>
<dbReference type="PaxDb" id="9606-ENSP00000331556"/>
<dbReference type="PeptideAtlas" id="P35663"/>
<dbReference type="ProteomicsDB" id="55129"/>
<dbReference type="Antibodypedia" id="14277">
    <property type="antibodies" value="48 antibodies from 19 providers"/>
</dbReference>
<dbReference type="DNASU" id="1538"/>
<dbReference type="Ensembl" id="ENST00000329312.5">
    <property type="protein sequence ID" value="ENSP00000331556.4"/>
    <property type="gene ID" value="ENSG00000183035.13"/>
</dbReference>
<dbReference type="GeneID" id="1538"/>
<dbReference type="KEGG" id="hsa:1538"/>
<dbReference type="MANE-Select" id="ENST00000329312.5">
    <property type="protein sequence ID" value="ENSP00000331556.4"/>
    <property type="RefSeq nucleotide sequence ID" value="NM_021118.3"/>
    <property type="RefSeq protein sequence ID" value="NP_066941.1"/>
</dbReference>
<dbReference type="UCSC" id="uc004eei.3">
    <property type="organism name" value="human"/>
</dbReference>
<dbReference type="AGR" id="HGNC:2582"/>
<dbReference type="CTD" id="1538"/>
<dbReference type="DisGeNET" id="1538"/>
<dbReference type="GeneCards" id="CYLC1"/>
<dbReference type="HGNC" id="HGNC:2582">
    <property type="gene designation" value="CYLC1"/>
</dbReference>
<dbReference type="HPA" id="ENSG00000183035">
    <property type="expression patterns" value="Tissue enriched (testis)"/>
</dbReference>
<dbReference type="MalaCards" id="CYLC1"/>
<dbReference type="MIM" id="300768">
    <property type="type" value="gene"/>
</dbReference>
<dbReference type="MIM" id="301119">
    <property type="type" value="phenotype"/>
</dbReference>
<dbReference type="neXtProt" id="NX_P35663"/>
<dbReference type="OpenTargets" id="ENSG00000183035"/>
<dbReference type="PharmGKB" id="PA27082"/>
<dbReference type="VEuPathDB" id="HostDB:ENSG00000183035"/>
<dbReference type="eggNOG" id="ENOG502RFCV">
    <property type="taxonomic scope" value="Eukaryota"/>
</dbReference>
<dbReference type="GeneTree" id="ENSGT00730000111075"/>
<dbReference type="HOGENOM" id="CLU_480276_0_0_1"/>
<dbReference type="InParanoid" id="P35663"/>
<dbReference type="OMA" id="RQAPFRN"/>
<dbReference type="PAN-GO" id="P35663">
    <property type="GO annotations" value="1 GO annotation based on evolutionary models"/>
</dbReference>
<dbReference type="PhylomeDB" id="P35663"/>
<dbReference type="TreeFam" id="TF337809"/>
<dbReference type="PathwayCommons" id="P35663"/>
<dbReference type="SignaLink" id="P35663"/>
<dbReference type="BioGRID-ORCS" id="1538">
    <property type="hits" value="11 hits in 765 CRISPR screens"/>
</dbReference>
<dbReference type="ChiTaRS" id="CYLC1">
    <property type="organism name" value="human"/>
</dbReference>
<dbReference type="GenomeRNAi" id="1538"/>
<dbReference type="Pharos" id="P35663">
    <property type="development level" value="Tdark"/>
</dbReference>
<dbReference type="PRO" id="PR:P35663"/>
<dbReference type="Proteomes" id="UP000005640">
    <property type="component" value="Chromosome X"/>
</dbReference>
<dbReference type="RNAct" id="P35663">
    <property type="molecule type" value="protein"/>
</dbReference>
<dbReference type="Bgee" id="ENSG00000183035">
    <property type="expression patterns" value="Expressed in sperm and 19 other cell types or tissues"/>
</dbReference>
<dbReference type="ExpressionAtlas" id="P35663">
    <property type="expression patterns" value="baseline and differential"/>
</dbReference>
<dbReference type="GO" id="GO:0043159">
    <property type="term" value="C:acrosomal matrix"/>
    <property type="evidence" value="ECO:0000314"/>
    <property type="project" value="MGI"/>
</dbReference>
<dbReference type="GO" id="GO:0033150">
    <property type="term" value="C:cytoskeletal calyx"/>
    <property type="evidence" value="ECO:0000314"/>
    <property type="project" value="UniProtKB"/>
</dbReference>
<dbReference type="GO" id="GO:0005634">
    <property type="term" value="C:nucleus"/>
    <property type="evidence" value="ECO:0007005"/>
    <property type="project" value="UniProtKB"/>
</dbReference>
<dbReference type="GO" id="GO:0061827">
    <property type="term" value="C:sperm head"/>
    <property type="evidence" value="ECO:0000315"/>
    <property type="project" value="UniProtKB"/>
</dbReference>
<dbReference type="GO" id="GO:0005200">
    <property type="term" value="F:structural constituent of cytoskeleton"/>
    <property type="evidence" value="ECO:0007669"/>
    <property type="project" value="InterPro"/>
</dbReference>
<dbReference type="GO" id="GO:0005198">
    <property type="term" value="F:structural molecule activity"/>
    <property type="evidence" value="ECO:0000303"/>
    <property type="project" value="UniProtKB"/>
</dbReference>
<dbReference type="GO" id="GO:0001675">
    <property type="term" value="P:acrosome assembly"/>
    <property type="evidence" value="ECO:0000315"/>
    <property type="project" value="UniProtKB"/>
</dbReference>
<dbReference type="GO" id="GO:0007283">
    <property type="term" value="P:spermatogenesis"/>
    <property type="evidence" value="ECO:0000315"/>
    <property type="project" value="UniProtKB"/>
</dbReference>
<dbReference type="InterPro" id="IPR026189">
    <property type="entry name" value="CYLC"/>
</dbReference>
<dbReference type="InterPro" id="IPR029354">
    <property type="entry name" value="Cylicin_N"/>
</dbReference>
<dbReference type="PANTHER" id="PTHR16742">
    <property type="entry name" value="CYCLICIN"/>
    <property type="match status" value="1"/>
</dbReference>
<dbReference type="PANTHER" id="PTHR16742:SF1">
    <property type="entry name" value="CYLICIN-1"/>
    <property type="match status" value="1"/>
</dbReference>
<dbReference type="Pfam" id="PF15241">
    <property type="entry name" value="Cylicin_N"/>
    <property type="match status" value="1"/>
</dbReference>
<sequence>MSLPRLLKVNIRTYDNSIPISESSRKSWNQKHFALTFPKPLQRGTNDKSRPLKSQITVTRHDKRKLEEGQKPAHKWIRHSFRKILQWPPIYTAAREQTPFRHLYTSKTHLKKAEYKKSKDEKGGTPLKKDSKKKGGSYATNPESKQIVEEKTKRQNEADKTPLKSSHENEQSKKSKSSSETNPESQNSKTVSKNCSQKDKKDSKNSKKTNTEFLHTKNNPKKDLKRSKTSNDPISEICSENSLNVDFLMLVGQSDDESINFDAWLRNYSQNNSKNYSLKYTKYTKKDTKKNAKKSSDAESEDSKDAKKDSKKVKKNVKKDDKKKDVKKDTESTDAESGDSKDERKDTKKDKKKLKKDDKKKDTKKYPESTDTESGDAKDARNDSRNLKKASKNDDKKKDAKKITFSTDSESELESKESQKDEKKDKKDSKTDNKKSVKNDEESTDADSEPKGDSKKGKKDEKKGKKDSKKDDKKKDAKKNAESTEMESDLELKKDKKHSKEKKGSKKDIKKDARKDTESTDAEFDESSKTGFKTSTKIKGSDTESEESLYKPGAKKKIDESDGTSANSKMEGLESKRGFRMSSKKTTFNEKGEKASTGRVPPSREKPPLPACEPSLPSPKVRRLCWCKMPPPPPKPRYAPLPEAPWIHKLL</sequence>
<feature type="chain" id="PRO_0000079753" description="Cylicin-1">
    <location>
        <begin position="1"/>
        <end position="651"/>
    </location>
</feature>
<feature type="repeat" description="1">
    <location>
        <begin position="278"/>
        <end position="305"/>
    </location>
</feature>
<feature type="repeat" description="2">
    <location>
        <begin position="306"/>
        <end position="342"/>
    </location>
</feature>
<feature type="repeat" description="3">
    <location>
        <begin position="343"/>
        <end position="379"/>
    </location>
</feature>
<feature type="repeat" description="4">
    <location>
        <begin position="380"/>
        <end position="417"/>
    </location>
</feature>
<feature type="repeat" description="5">
    <location>
        <begin position="418"/>
        <end position="453"/>
    </location>
</feature>
<feature type="repeat" description="6">
    <location>
        <begin position="454"/>
        <end position="491"/>
    </location>
</feature>
<feature type="repeat" description="7">
    <location>
        <begin position="492"/>
        <end position="531"/>
    </location>
</feature>
<feature type="repeat" description="8">
    <location>
        <begin position="532"/>
        <end position="553"/>
    </location>
</feature>
<feature type="region of interest" description="Disordered" evidence="2">
    <location>
        <begin position="110"/>
        <end position="241"/>
    </location>
</feature>
<feature type="region of interest" description="Disordered" evidence="2">
    <location>
        <begin position="267"/>
        <end position="615"/>
    </location>
</feature>
<feature type="region of interest" description="8 X approximate tandem repeats">
    <location>
        <begin position="532"/>
        <end position="553"/>
    </location>
</feature>
<feature type="compositionally biased region" description="Basic and acidic residues" evidence="2">
    <location>
        <begin position="111"/>
        <end position="129"/>
    </location>
</feature>
<feature type="compositionally biased region" description="Basic and acidic residues" evidence="2">
    <location>
        <begin position="146"/>
        <end position="173"/>
    </location>
</feature>
<feature type="compositionally biased region" description="Polar residues" evidence="2">
    <location>
        <begin position="186"/>
        <end position="195"/>
    </location>
</feature>
<feature type="compositionally biased region" description="Basic and acidic residues" evidence="2">
    <location>
        <begin position="196"/>
        <end position="205"/>
    </location>
</feature>
<feature type="compositionally biased region" description="Polar residues" evidence="2">
    <location>
        <begin position="230"/>
        <end position="241"/>
    </location>
</feature>
<feature type="compositionally biased region" description="Low complexity" evidence="2">
    <location>
        <begin position="271"/>
        <end position="281"/>
    </location>
</feature>
<feature type="compositionally biased region" description="Basic and acidic residues" evidence="2">
    <location>
        <begin position="284"/>
        <end position="308"/>
    </location>
</feature>
<feature type="compositionally biased region" description="Basic and acidic residues" evidence="2">
    <location>
        <begin position="318"/>
        <end position="331"/>
    </location>
</feature>
<feature type="compositionally biased region" description="Basic and acidic residues" evidence="2">
    <location>
        <begin position="338"/>
        <end position="368"/>
    </location>
</feature>
<feature type="compositionally biased region" description="Basic and acidic residues" evidence="2">
    <location>
        <begin position="375"/>
        <end position="402"/>
    </location>
</feature>
<feature type="compositionally biased region" description="Basic and acidic residues" evidence="2">
    <location>
        <begin position="413"/>
        <end position="441"/>
    </location>
</feature>
<feature type="compositionally biased region" description="Basic and acidic residues" evidence="2">
    <location>
        <begin position="448"/>
        <end position="482"/>
    </location>
</feature>
<feature type="compositionally biased region" description="Basic residues" evidence="2">
    <location>
        <begin position="495"/>
        <end position="505"/>
    </location>
</feature>
<feature type="compositionally biased region" description="Basic and acidic residues" evidence="2">
    <location>
        <begin position="506"/>
        <end position="518"/>
    </location>
</feature>
<feature type="compositionally biased region" description="Polar residues" evidence="2">
    <location>
        <begin position="529"/>
        <end position="538"/>
    </location>
</feature>
<feature type="compositionally biased region" description="Basic and acidic residues" evidence="2">
    <location>
        <begin position="587"/>
        <end position="607"/>
    </location>
</feature>
<feature type="sequence variant" id="VAR_050937" description="In dbSNP:rs12008888.">
    <original>D</original>
    <variation>H</variation>
    <location>
        <position position="399"/>
    </location>
</feature>
<feature type="sequence variant" id="VAR_089728" description="In SPGFX8; uncertain significance; dbSNP:rs143901083." evidence="4">
    <original>K</original>
    <variation>N</variation>
    <location>
        <position position="459"/>
    </location>
</feature>
<feature type="sequence variant" id="VAR_089729" description="In SPGFX8; uncertain significance; the patient also carries a variant in CYLC2; dbSNP:rs1490196235." evidence="3">
    <original>E</original>
    <variation>Q</variation>
    <location>
        <position position="574"/>
    </location>
</feature>
<feature type="sequence conflict" description="In Ref. 3; CAA80457." evidence="6" ref="3">
    <original>S</original>
    <variation>G</variation>
    <location>
        <position position="54"/>
    </location>
</feature>